<dbReference type="EC" id="5.2.1.8"/>
<dbReference type="EMBL" id="M95123">
    <property type="protein sequence ID" value="AAA30348.1"/>
    <property type="molecule type" value="mRNA"/>
</dbReference>
<dbReference type="EMBL" id="BC109932">
    <property type="protein sequence ID" value="AAI09933.1"/>
    <property type="molecule type" value="mRNA"/>
</dbReference>
<dbReference type="PIR" id="A42212">
    <property type="entry name" value="A40050"/>
</dbReference>
<dbReference type="RefSeq" id="NP_001033201.1">
    <property type="nucleotide sequence ID" value="NM_001038112.3"/>
</dbReference>
<dbReference type="BMRB" id="P26884"/>
<dbReference type="SMR" id="P26884"/>
<dbReference type="FunCoup" id="P26884">
    <property type="interactions" value="1377"/>
</dbReference>
<dbReference type="STRING" id="9913.ENSBTAP00000003377"/>
<dbReference type="PaxDb" id="9913-ENSBTAP00000003377"/>
<dbReference type="GeneID" id="515069"/>
<dbReference type="KEGG" id="bta:515069"/>
<dbReference type="CTD" id="2287"/>
<dbReference type="VEuPathDB" id="HostDB:ENSBTAG00000002610"/>
<dbReference type="eggNOG" id="KOG0544">
    <property type="taxonomic scope" value="Eukaryota"/>
</dbReference>
<dbReference type="HOGENOM" id="CLU_013615_12_2_1"/>
<dbReference type="InParanoid" id="P26884"/>
<dbReference type="OMA" id="IEPDWAY"/>
<dbReference type="OrthoDB" id="1902587at2759"/>
<dbReference type="TreeFam" id="TF105293"/>
<dbReference type="Proteomes" id="UP000009136">
    <property type="component" value="Chromosome 21"/>
</dbReference>
<dbReference type="Bgee" id="ENSBTAG00000002610">
    <property type="expression patterns" value="Expressed in gluteus medius and 103 other cell types or tissues"/>
</dbReference>
<dbReference type="GO" id="GO:0005634">
    <property type="term" value="C:nucleus"/>
    <property type="evidence" value="ECO:0007669"/>
    <property type="project" value="UniProtKB-SubCell"/>
</dbReference>
<dbReference type="GO" id="GO:0003755">
    <property type="term" value="F:peptidyl-prolyl cis-trans isomerase activity"/>
    <property type="evidence" value="ECO:0007669"/>
    <property type="project" value="UniProtKB-KW"/>
</dbReference>
<dbReference type="CDD" id="cd21063">
    <property type="entry name" value="BTHB_FKBP25"/>
    <property type="match status" value="1"/>
</dbReference>
<dbReference type="FunFam" id="1.10.720.80:FF:000002">
    <property type="entry name" value="Peptidylprolyl isomerase"/>
    <property type="match status" value="1"/>
</dbReference>
<dbReference type="FunFam" id="3.10.50.40:FF:000023">
    <property type="entry name" value="Peptidylprolyl isomerase"/>
    <property type="match status" value="1"/>
</dbReference>
<dbReference type="Gene3D" id="1.10.720.80">
    <property type="match status" value="1"/>
</dbReference>
<dbReference type="Gene3D" id="3.10.50.40">
    <property type="match status" value="1"/>
</dbReference>
<dbReference type="InterPro" id="IPR043368">
    <property type="entry name" value="FKBP3"/>
</dbReference>
<dbReference type="InterPro" id="IPR041200">
    <property type="entry name" value="FKBP3_BTHB"/>
</dbReference>
<dbReference type="InterPro" id="IPR046357">
    <property type="entry name" value="PPIase_dom_sf"/>
</dbReference>
<dbReference type="InterPro" id="IPR001179">
    <property type="entry name" value="PPIase_FKBP_dom"/>
</dbReference>
<dbReference type="PANTHER" id="PTHR46493">
    <property type="entry name" value="PEPTIDYL-PROLYL CIS-TRANS ISOMERASE FKBP3"/>
    <property type="match status" value="1"/>
</dbReference>
<dbReference type="PANTHER" id="PTHR46493:SF1">
    <property type="entry name" value="PEPTIDYL-PROLYL CIS-TRANS ISOMERASE FKBP3"/>
    <property type="match status" value="1"/>
</dbReference>
<dbReference type="Pfam" id="PF18410">
    <property type="entry name" value="BTHB"/>
    <property type="match status" value="1"/>
</dbReference>
<dbReference type="Pfam" id="PF00254">
    <property type="entry name" value="FKBP_C"/>
    <property type="match status" value="1"/>
</dbReference>
<dbReference type="SUPFAM" id="SSF54534">
    <property type="entry name" value="FKBP-like"/>
    <property type="match status" value="1"/>
</dbReference>
<dbReference type="PROSITE" id="PS50059">
    <property type="entry name" value="FKBP_PPIASE"/>
    <property type="match status" value="1"/>
</dbReference>
<sequence length="224" mass="25191">MAAAVPQRAWTVEQLRSEQLPKKDIIKFLQDHGSDSFLAEHKLLGNIKNVAKTANKDHLVTAYNHLFESKRFKGTESISKVSEQVKNVKLNEDKPKETKSEETLDEGPPKYTKSVLKKGDKTNFPKKGDVVHCWYTGTLQDGTVFDTNIQTSSKKKKNAKPLSFKVGIGKVIRGWDEALLTMSKGEKARLEIEPEWAYGKKGQPDAKIPPNAKLIFEVELVDID</sequence>
<proteinExistence type="evidence at protein level"/>
<protein>
    <recommendedName>
        <fullName>Peptidyl-prolyl cis-trans isomerase FKBP3</fullName>
        <shortName>PPIase FKBP3</shortName>
        <ecNumber>5.2.1.8</ecNumber>
    </recommendedName>
    <alternativeName>
        <fullName>25 kDa FK506-binding protein</fullName>
        <shortName>25 kDa FKBP</shortName>
        <shortName>FKBP-25</shortName>
    </alternativeName>
    <alternativeName>
        <fullName>FK506-binding protein 3</fullName>
        <shortName>FKBP-3</shortName>
    </alternativeName>
    <alternativeName>
        <fullName>Immunophilin FKBP25</fullName>
    </alternativeName>
    <alternativeName>
        <fullName>Rapamycin-selective 25 kDa immunophilin</fullName>
    </alternativeName>
    <alternativeName>
        <fullName>Rotamase</fullName>
    </alternativeName>
</protein>
<feature type="initiator methionine" description="Removed" evidence="1">
    <location>
        <position position="1"/>
    </location>
</feature>
<feature type="chain" id="PRO_0000075306" description="Peptidyl-prolyl cis-trans isomerase FKBP3">
    <location>
        <begin position="2"/>
        <end position="224"/>
    </location>
</feature>
<feature type="domain" description="PPIase FKBP-type" evidence="3">
    <location>
        <begin position="128"/>
        <end position="224"/>
    </location>
</feature>
<feature type="region of interest" description="Disordered" evidence="4">
    <location>
        <begin position="89"/>
        <end position="113"/>
    </location>
</feature>
<feature type="compositionally biased region" description="Basic and acidic residues" evidence="4">
    <location>
        <begin position="89"/>
        <end position="102"/>
    </location>
</feature>
<feature type="modified residue" description="N-acetylalanine" evidence="1">
    <location>
        <position position="2"/>
    </location>
</feature>
<feature type="modified residue" description="Phosphoserine" evidence="1">
    <location>
        <position position="36"/>
    </location>
</feature>
<feature type="modified residue" description="N6-acetyllysine" evidence="2">
    <location>
        <position position="99"/>
    </location>
</feature>
<feature type="modified residue" description="Phosphoserine" evidence="1">
    <location>
        <position position="152"/>
    </location>
</feature>
<feature type="modified residue" description="N6-acetyllysine" evidence="1">
    <location>
        <position position="170"/>
    </location>
</feature>
<feature type="sequence conflict" description="In Ref. 3; AA sequence." evidence="5" ref="3">
    <original>KIP</original>
    <variation>IXQ</variation>
    <location>
        <begin position="207"/>
        <end position="209"/>
    </location>
</feature>
<name>FKBP3_BOVIN</name>
<gene>
    <name type="primary">FKBP3</name>
</gene>
<evidence type="ECO:0000250" key="1">
    <source>
        <dbReference type="UniProtKB" id="Q00688"/>
    </source>
</evidence>
<evidence type="ECO:0000250" key="2">
    <source>
        <dbReference type="UniProtKB" id="Q62446"/>
    </source>
</evidence>
<evidence type="ECO:0000255" key="3">
    <source>
        <dbReference type="PROSITE-ProRule" id="PRU00277"/>
    </source>
</evidence>
<evidence type="ECO:0000256" key="4">
    <source>
        <dbReference type="SAM" id="MobiDB-lite"/>
    </source>
</evidence>
<evidence type="ECO:0000305" key="5"/>
<reference key="1">
    <citation type="submission" date="1993-05" db="EMBL/GenBank/DDBJ databases">
        <authorList>
            <person name="Lippke J.A."/>
            <person name="Hsiao K."/>
            <person name="Peattie D.A."/>
        </authorList>
    </citation>
    <scope>NUCLEOTIDE SEQUENCE [MRNA]</scope>
    <source>
        <tissue>Brain</tissue>
    </source>
</reference>
<reference key="2">
    <citation type="submission" date="2005-11" db="EMBL/GenBank/DDBJ databases">
        <authorList>
            <consortium name="NIH - Mammalian Gene Collection (MGC) project"/>
        </authorList>
    </citation>
    <scope>NUCLEOTIDE SEQUENCE [LARGE SCALE MRNA]</scope>
    <source>
        <strain>Crossbred X Angus</strain>
        <tissue>Liver</tissue>
    </source>
</reference>
<reference key="3">
    <citation type="journal article" date="1992" name="Biochemistry">
        <title>A rapamycin-selective 25-kDa immunophilin.</title>
        <authorList>
            <person name="Galat A."/>
            <person name="Lane W.S."/>
            <person name="Standaert R.F."/>
            <person name="Schreiber S.L."/>
        </authorList>
    </citation>
    <scope>PROTEIN SEQUENCE OF 9-224</scope>
    <source>
        <tissue>Brain</tissue>
        <tissue>Spleen</tissue>
        <tissue>Thymus</tissue>
    </source>
</reference>
<keyword id="KW-0007">Acetylation</keyword>
<keyword id="KW-0903">Direct protein sequencing</keyword>
<keyword id="KW-0413">Isomerase</keyword>
<keyword id="KW-0539">Nucleus</keyword>
<keyword id="KW-0597">Phosphoprotein</keyword>
<keyword id="KW-1185">Reference proteome</keyword>
<keyword id="KW-0697">Rotamase</keyword>
<comment type="function">
    <text>FK506- and rapamycin-binding proteins (FKBPs) constitute a family of receptors for the two immunosuppressants which inhibit T-cell proliferation by arresting two dinstinct cytoplasmic signal transmission pathways. PPIases accelerate the folding of proteins.</text>
</comment>
<comment type="catalytic activity">
    <reaction>
        <text>[protein]-peptidylproline (omega=180) = [protein]-peptidylproline (omega=0)</text>
        <dbReference type="Rhea" id="RHEA:16237"/>
        <dbReference type="Rhea" id="RHEA-COMP:10747"/>
        <dbReference type="Rhea" id="RHEA-COMP:10748"/>
        <dbReference type="ChEBI" id="CHEBI:83833"/>
        <dbReference type="ChEBI" id="CHEBI:83834"/>
        <dbReference type="EC" id="5.2.1.8"/>
    </reaction>
</comment>
<comment type="activity regulation">
    <text>Inhibited preferentially by rapamycin over FK506.</text>
</comment>
<comment type="subcellular location">
    <subcellularLocation>
        <location>Nucleus</location>
    </subcellularLocation>
</comment>
<comment type="similarity">
    <text evidence="5">Belongs to the FKBP-type PPIase family.</text>
</comment>
<accession>P26884</accession>
<accession>Q32KT9</accession>
<organism>
    <name type="scientific">Bos taurus</name>
    <name type="common">Bovine</name>
    <dbReference type="NCBI Taxonomy" id="9913"/>
    <lineage>
        <taxon>Eukaryota</taxon>
        <taxon>Metazoa</taxon>
        <taxon>Chordata</taxon>
        <taxon>Craniata</taxon>
        <taxon>Vertebrata</taxon>
        <taxon>Euteleostomi</taxon>
        <taxon>Mammalia</taxon>
        <taxon>Eutheria</taxon>
        <taxon>Laurasiatheria</taxon>
        <taxon>Artiodactyla</taxon>
        <taxon>Ruminantia</taxon>
        <taxon>Pecora</taxon>
        <taxon>Bovidae</taxon>
        <taxon>Bovinae</taxon>
        <taxon>Bos</taxon>
    </lineage>
</organism>